<feature type="chain" id="PRO_0000242693" description="WD repeat and FYVE domain-containing protein 3">
    <location>
        <begin position="1"/>
        <end position="3526"/>
    </location>
</feature>
<feature type="domain" description="BEACH-type PH" evidence="4">
    <location>
        <begin position="2531"/>
        <end position="2656"/>
    </location>
</feature>
<feature type="domain" description="BEACH" evidence="2">
    <location>
        <begin position="2683"/>
        <end position="2976"/>
    </location>
</feature>
<feature type="repeat" description="WD 1">
    <location>
        <begin position="3077"/>
        <end position="3115"/>
    </location>
</feature>
<feature type="repeat" description="WD 2">
    <location>
        <begin position="3125"/>
        <end position="3164"/>
    </location>
</feature>
<feature type="repeat" description="WD 3">
    <location>
        <begin position="3167"/>
        <end position="3206"/>
    </location>
</feature>
<feature type="repeat" description="WD 4">
    <location>
        <begin position="3210"/>
        <end position="3254"/>
    </location>
</feature>
<feature type="repeat" description="WD 5">
    <location>
        <begin position="3408"/>
        <end position="3447"/>
    </location>
</feature>
<feature type="zinc finger region" description="FYVE-type" evidence="3">
    <location>
        <begin position="3454"/>
        <end position="3514"/>
    </location>
</feature>
<feature type="region of interest" description="Sufficient for localization to p62 bodies/ALIS" evidence="7">
    <location>
        <begin position="2285"/>
        <end position="2981"/>
    </location>
</feature>
<feature type="region of interest" description="Disordered" evidence="5">
    <location>
        <begin position="2403"/>
        <end position="2429"/>
    </location>
</feature>
<feature type="region of interest" description="Disordered" evidence="5">
    <location>
        <begin position="2459"/>
        <end position="2522"/>
    </location>
</feature>
<feature type="region of interest" description="Interaction with SQSTM1" evidence="7">
    <location>
        <begin position="2586"/>
        <end position="3526"/>
    </location>
</feature>
<feature type="region of interest" description="Interaction with ATG5" evidence="8">
    <location>
        <begin position="2981"/>
        <end position="3526"/>
    </location>
</feature>
<feature type="region of interest" description="Disordered" evidence="5">
    <location>
        <begin position="3272"/>
        <end position="3335"/>
    </location>
</feature>
<feature type="region of interest" description="Interaction with GABARAP" evidence="11">
    <location>
        <begin position="3313"/>
        <end position="3363"/>
    </location>
</feature>
<feature type="short sequence motif" description="LC3-interacting region (LIR)" evidence="14">
    <location>
        <begin position="3346"/>
        <end position="3349"/>
    </location>
</feature>
<feature type="compositionally biased region" description="Basic and acidic residues" evidence="5">
    <location>
        <begin position="2468"/>
        <end position="2477"/>
    </location>
</feature>
<feature type="compositionally biased region" description="Acidic residues" evidence="5">
    <location>
        <begin position="3278"/>
        <end position="3290"/>
    </location>
</feature>
<feature type="binding site" evidence="3">
    <location>
        <position position="3460"/>
    </location>
    <ligand>
        <name>Zn(2+)</name>
        <dbReference type="ChEBI" id="CHEBI:29105"/>
        <label>1</label>
    </ligand>
</feature>
<feature type="binding site" evidence="3">
    <location>
        <position position="3463"/>
    </location>
    <ligand>
        <name>Zn(2+)</name>
        <dbReference type="ChEBI" id="CHEBI:29105"/>
        <label>1</label>
    </ligand>
</feature>
<feature type="binding site" evidence="3">
    <location>
        <position position="3476"/>
    </location>
    <ligand>
        <name>Zn(2+)</name>
        <dbReference type="ChEBI" id="CHEBI:29105"/>
        <label>2</label>
    </ligand>
</feature>
<feature type="binding site" evidence="3">
    <location>
        <position position="3479"/>
    </location>
    <ligand>
        <name>Zn(2+)</name>
        <dbReference type="ChEBI" id="CHEBI:29105"/>
        <label>2</label>
    </ligand>
</feature>
<feature type="binding site" evidence="3">
    <location>
        <position position="3484"/>
    </location>
    <ligand>
        <name>Zn(2+)</name>
        <dbReference type="ChEBI" id="CHEBI:29105"/>
        <label>1</label>
    </ligand>
</feature>
<feature type="binding site" evidence="3">
    <location>
        <position position="3487"/>
    </location>
    <ligand>
        <name>Zn(2+)</name>
        <dbReference type="ChEBI" id="CHEBI:29105"/>
        <label>1</label>
    </ligand>
</feature>
<feature type="binding site" evidence="3">
    <location>
        <position position="3506"/>
    </location>
    <ligand>
        <name>Zn(2+)</name>
        <dbReference type="ChEBI" id="CHEBI:29105"/>
        <label>2</label>
    </ligand>
</feature>
<feature type="binding site" evidence="3">
    <location>
        <position position="3509"/>
    </location>
    <ligand>
        <name>Zn(2+)</name>
        <dbReference type="ChEBI" id="CHEBI:29105"/>
        <label>2</label>
    </ligand>
</feature>
<feature type="modified residue" description="Phosphoserine" evidence="1">
    <location>
        <position position="1942"/>
    </location>
</feature>
<feature type="modified residue" description="Phosphoserine" evidence="16">
    <location>
        <position position="2278"/>
    </location>
</feature>
<feature type="modified residue" description="Phosphoserine" evidence="1">
    <location>
        <position position="2492"/>
    </location>
</feature>
<feature type="modified residue" description="Phosphoserine" evidence="1">
    <location>
        <position position="3335"/>
    </location>
</feature>
<feature type="modified residue" description="Phosphoserine" evidence="16">
    <location>
        <position position="3339"/>
    </location>
</feature>
<feature type="splice variant" id="VSP_019475" description="In isoform 2." evidence="13">
    <location>
        <begin position="2408"/>
        <end position="2424"/>
    </location>
</feature>
<feature type="sequence variant" id="VAR_079130" description="In MCPH18; increased cellular DVL3 protein levels as compared to the wild-type protein and loss of attenuation of Wnt signaling; when expressed in Drosophila, causes brain anomalies; dbSNP:rs1553924800." evidence="12">
    <original>R</original>
    <variation>W</variation>
    <location>
        <position position="2637"/>
    </location>
</feature>
<feature type="sequence variant" id="VAR_026864" description="In dbSNP:rs17368018.">
    <original>I</original>
    <variation>V</variation>
    <location>
        <position position="3032"/>
    </location>
</feature>
<feature type="mutagenesis site" description="Decreased interaction with GABARAP, no effect on interaction with MAP1LC3B; when associated with A-3344 and A-3351." evidence="11">
    <original>K</original>
    <variation>A</variation>
    <location>
        <position position="3343"/>
    </location>
</feature>
<feature type="mutagenesis site" description="Decreased interaction with GABARAP, no effect on interaction with MAP1LC3B; when associated with A-3343 and A-3351." evidence="11">
    <original>D</original>
    <variation>A</variation>
    <location>
        <position position="3344"/>
    </location>
</feature>
<feature type="mutagenesis site" description="Abolishes interaction with GABARAP and MAP1LC3C." evidence="11">
    <original>F</original>
    <variation>A</variation>
    <location>
        <position position="3346"/>
    </location>
</feature>
<feature type="mutagenesis site" description="Decreases interaction with GABARAP and MAP1LC3C." evidence="11">
    <original>I</original>
    <variation>A</variation>
    <location>
        <position position="3347"/>
    </location>
</feature>
<feature type="mutagenesis site" description="Decreases interaction with GABARAP and MAP1LC3C." evidence="11">
    <original>F</original>
    <variation>A</variation>
    <location>
        <position position="3348"/>
    </location>
</feature>
<feature type="mutagenesis site" description="Decreases interaction with GABARAP and MAP1LC3C." evidence="11">
    <original>V</original>
    <variation>A</variation>
    <location>
        <position position="3349"/>
    </location>
</feature>
<feature type="mutagenesis site" description="Decreased interaction with GABARAP, no effect on interaction with MAP1LC3B; when associated with A-3343 and A-3344." evidence="11">
    <original>Y</original>
    <variation>A</variation>
    <location>
        <position position="3351"/>
    </location>
</feature>
<feature type="sequence conflict" description="In Ref. 1; AAN15137." evidence="15" ref="1">
    <original>N</original>
    <variation>T</variation>
    <location>
        <position position="2944"/>
    </location>
</feature>
<feature type="sequence conflict" description="In Ref. 5; BAB71020." evidence="15" ref="5">
    <original>L</original>
    <variation>P</variation>
    <location>
        <position position="3396"/>
    </location>
</feature>
<feature type="strand" evidence="17">
    <location>
        <begin position="3346"/>
        <end position="3348"/>
    </location>
</feature>
<feature type="strand" evidence="18">
    <location>
        <begin position="3456"/>
        <end position="3459"/>
    </location>
</feature>
<feature type="strand" evidence="18">
    <location>
        <begin position="3461"/>
        <end position="3463"/>
    </location>
</feature>
<feature type="strand" evidence="18">
    <location>
        <begin position="3469"/>
        <end position="3471"/>
    </location>
</feature>
<feature type="strand" evidence="18">
    <location>
        <begin position="3473"/>
        <end position="3475"/>
    </location>
</feature>
<feature type="turn" evidence="18">
    <location>
        <begin position="3477"/>
        <end position="3479"/>
    </location>
</feature>
<feature type="strand" evidence="18">
    <location>
        <begin position="3482"/>
        <end position="3484"/>
    </location>
</feature>
<feature type="turn" evidence="18">
    <location>
        <begin position="3485"/>
        <end position="3487"/>
    </location>
</feature>
<feature type="strand" evidence="18">
    <location>
        <begin position="3492"/>
        <end position="3494"/>
    </location>
</feature>
<feature type="helix" evidence="18">
    <location>
        <begin position="3495"/>
        <end position="3497"/>
    </location>
</feature>
<feature type="strand" evidence="18">
    <location>
        <begin position="3499"/>
        <end position="3503"/>
    </location>
</feature>
<feature type="helix" evidence="18">
    <location>
        <begin position="3507"/>
        <end position="3514"/>
    </location>
</feature>
<comment type="function">
    <text evidence="1 6 7 8 10 12">Required for selective macroautophagy (aggrephagy). Acts as an adapter protein by linking specific proteins destined for degradation to the core autophagic machinery members, such as the ATG5-ATG12-ATG16L E3-like ligase, SQSTM1 and LC3 (PubMed:20417604). Along with p62/SQSTM1, involved in the formation and autophagic degradation of cytoplasmic ubiquitin-containing inclusions (p62 bodies, ALIS/aggresome-like induced structures). Along with SQSTM1, required to recruit ubiquitinated proteins to PML bodies in the nucleus (PubMed:20168092). Important for normal brain development. Essential for the formation of axonal tracts throughout the brain and spinal cord, including the formation of the major forebrain commissures. Involved in the ability of neural cells to respond to guidance cues. Required for cortical neurons to respond to the trophic effects of netrin-1/NTN1 (By similarity). Regulates Wnt signaling through the removal of DVL3 aggregates, likely in an autophagy-dependent manner. This process may be important for the determination of brain size during embryonic development (PubMed:27008544). May regulate osteoclastogenesis by acting on the TNFSF11/RANKL - TRAF6 pathway (By similarity). After cytokinetic abscission, involved in midbody remnant degradation (PubMed:24128730). In vitro strongly binds to phosphatidylinositol 3-phosphate (PtdIns3P) (PubMed:15292400).</text>
</comment>
<comment type="subunit">
    <text evidence="1 7 8 9 11">Directly interacts with ATG5 and associates with the ATG12-ATG5-ATG16L complex (PubMed:20417604). Interacts with p62/SQSTM1; this interaction is required to recruit WDFY3 to cytoplasmic bodies and to PML bodies (PubMed:20168092, PubMed:20971078). Directly interacts with GABARAP, GABARAPL1 and GABARAPL2; the interaction with GABARAP is required for WDFY3 recruitment to MAP1LC3B-positive p62/SQSTM1 bodies. Weakly interacts with MAP1LC3C; this interaction is direct. Does not interact with MAP1LC3A, nor MAP1LC3B (PubMed:24668264). Interacts with TRAF6 (By similarity).</text>
</comment>
<comment type="interaction">
    <interactant intactId="EBI-1569256">
        <id>Q8IZQ1</id>
    </interactant>
    <interactant intactId="EBI-1047414">
        <id>Q9H1Y0</id>
        <label>ATG5</label>
    </interactant>
    <organismsDiffer>false</organismsDiffer>
    <experiments>7</experiments>
</comment>
<comment type="interaction">
    <interactant intactId="EBI-1569256">
        <id>Q8IZQ1</id>
    </interactant>
    <interactant intactId="EBI-10106927">
        <id>Q6IAW1</id>
        <label>GABARAP</label>
    </interactant>
    <organismsDiffer>false</organismsDiffer>
    <experiments>17</experiments>
</comment>
<comment type="interaction">
    <interactant intactId="EBI-1569256">
        <id>Q8IZQ1</id>
    </interactant>
    <interactant intactId="EBI-746969">
        <id>Q9H0R8</id>
        <label>GABARAPL1</label>
    </interactant>
    <organismsDiffer>false</organismsDiffer>
    <experiments>3</experiments>
</comment>
<comment type="interaction">
    <interactant intactId="EBI-1569256">
        <id>Q8IZQ1</id>
    </interactant>
    <interactant intactId="EBI-720116">
        <id>P60520</id>
        <label>GABARAPL2</label>
    </interactant>
    <organismsDiffer>false</organismsDiffer>
    <experiments>3</experiments>
</comment>
<comment type="interaction">
    <interactant intactId="EBI-1569256">
        <id>Q8IZQ1</id>
    </interactant>
    <interactant intactId="EBI-466029">
        <id>P42858</id>
        <label>HTT</label>
    </interactant>
    <organismsDiffer>false</organismsDiffer>
    <experiments>10</experiments>
</comment>
<comment type="interaction">
    <interactant intactId="EBI-1569256">
        <id>Q8IZQ1</id>
    </interactant>
    <interactant intactId="EBI-373144">
        <id>Q9GZQ8</id>
        <label>MAP1LC3B</label>
    </interactant>
    <organismsDiffer>false</organismsDiffer>
    <experiments>6</experiments>
</comment>
<comment type="interaction">
    <interactant intactId="EBI-1569256">
        <id>Q8IZQ1</id>
    </interactant>
    <interactant intactId="EBI-2603996">
        <id>Q9BXW4</id>
        <label>MAP1LC3C</label>
    </interactant>
    <organismsDiffer>false</organismsDiffer>
    <experiments>7</experiments>
</comment>
<comment type="interaction">
    <interactant intactId="EBI-1569256">
        <id>Q8IZQ1</id>
    </interactant>
    <interactant intactId="EBI-79893">
        <id>Q92569</id>
        <label>PIK3R3</label>
    </interactant>
    <organismsDiffer>false</organismsDiffer>
    <experiments>2</experiments>
</comment>
<comment type="interaction">
    <interactant intactId="EBI-1569256">
        <id>Q8IZQ1</id>
    </interactant>
    <interactant intactId="EBI-307104">
        <id>Q13501</id>
        <label>SQSTM1</label>
    </interactant>
    <organismsDiffer>false</organismsDiffer>
    <experiments>7</experiments>
</comment>
<comment type="interaction">
    <interactant intactId="EBI-1569256">
        <id>Q8IZQ1</id>
    </interactant>
    <interactant intactId="EBI-9675698">
        <id>P14079</id>
        <label>tax</label>
    </interactant>
    <organismsDiffer>true</organismsDiffer>
    <experiments>3</experiments>
</comment>
<comment type="interaction">
    <interactant intactId="EBI-10264625">
        <id>Q8IZQ1-2</id>
    </interactant>
    <interactant intactId="EBI-742887">
        <id>Q8TAP6</id>
        <label>CEP76</label>
    </interactant>
    <organismsDiffer>false</organismsDiffer>
    <experiments>3</experiments>
</comment>
<comment type="interaction">
    <interactant intactId="EBI-10264625">
        <id>Q8IZQ1-2</id>
    </interactant>
    <interactant intactId="EBI-748974">
        <id>Q96CV9</id>
        <label>OPTN</label>
    </interactant>
    <organismsDiffer>false</organismsDiffer>
    <experiments>3</experiments>
</comment>
<comment type="interaction">
    <interactant intactId="EBI-10264625">
        <id>Q8IZQ1-2</id>
    </interactant>
    <interactant intactId="EBI-50433196">
        <id>A0A6Q8PF08</id>
        <label>PMP22</label>
    </interactant>
    <organismsDiffer>false</organismsDiffer>
    <experiments>3</experiments>
</comment>
<comment type="interaction">
    <interactant intactId="EBI-10264625">
        <id>Q8IZQ1-2</id>
    </interactant>
    <interactant intactId="EBI-739510">
        <id>Q9HCM9</id>
        <label>TRIM39</label>
    </interactant>
    <organismsDiffer>false</organismsDiffer>
    <experiments>3</experiments>
</comment>
<comment type="interaction">
    <interactant intactId="EBI-10264625">
        <id>Q8IZQ1-2</id>
    </interactant>
    <interactant intactId="EBI-5658292">
        <id>Q8NCP5</id>
        <label>ZBTB44</label>
    </interactant>
    <organismsDiffer>false</organismsDiffer>
    <experiments>3</experiments>
</comment>
<comment type="subcellular location">
    <subcellularLocation>
        <location evidence="6 7 8 9">Nucleus membrane</location>
    </subcellularLocation>
    <subcellularLocation>
        <location evidence="6 7 8 9">Cytoplasm</location>
        <location evidence="6 7 8 9">Cytosol</location>
    </subcellularLocation>
    <subcellularLocation>
        <location evidence="7">Nucleus</location>
        <location evidence="7">PML body</location>
    </subcellularLocation>
    <subcellularLocation>
        <location>Membrane</location>
        <topology evidence="6">Peripheral membrane protein</topology>
        <orientation evidence="15">Cytoplasmic side</orientation>
    </subcellularLocation>
    <subcellularLocation>
        <location evidence="1">Perikaryon</location>
    </subcellularLocation>
    <subcellularLocation>
        <location evidence="1">Cell projection</location>
        <location evidence="1">Axon</location>
    </subcellularLocation>
    <text evidence="1 6 7 8 9">Relocalization from the nucleus to the cytosol is stimulated by cellular stress, such as starvation or proteasomal inhibition. In the cytosol of starved cells, colocalizes with autophagic structures (PubMed:15292400, PubMed:20168092, PubMed:20417604, PubMed:20971078). This redistribution is dependent on p62/SQSTM1 (PubMed:20168092). When nuclear export is blocked by treatment with leptomycin B, accumulates in nuclear bodies, that completely or partially colocalize with promyelocytic leukemia (PML) bodies (PubMed:20168092). Localizes throughout neurons, including within axons. In neurons, enriched in the light membrane fraction along with the synaptosomal membrane protein synaptophysin and the membrane-bound form of LC3/MAP1LC3A/MAP1LC3B, called LC3-II, a classic marker for autophagic vesicles (By similarity).</text>
</comment>
<comment type="alternative products">
    <event type="alternative splicing"/>
    <isoform>
        <id>Q8IZQ1-1</id>
        <name>1</name>
        <sequence type="displayed"/>
    </isoform>
    <isoform>
        <id>Q8IZQ1-2</id>
        <name>2</name>
        <sequence type="described" ref="VSP_019475"/>
    </isoform>
</comment>
<comment type="tissue specificity">
    <text evidence="9">Expressed in osteoclast and their mononuclear precursors (at protein level).</text>
</comment>
<comment type="domain">
    <text evidence="11">The LIR (LC3-interacting region) motif mediates the interaction with MAP1LC3C and other ATG8 family members.</text>
</comment>
<comment type="domain">
    <text evidence="6">The FYVE domain mediates binding to phosphatidylinositol 3-phosphate (PtdIns3P).</text>
</comment>
<comment type="disease" evidence="12">
    <disease id="DI-05016">
        <name>Microcephaly 18, primary, autosomal dominant</name>
        <acronym>MCPH18</acronym>
        <description>A form of microcephaly, a disease defined as a head circumference more than 3 standard deviations below the age, sex and ethnically matched mean. Brain weight is markedly reduced and the cerebral cortex is disproportionately small. MCPH18 affected individuals manifest microcephaly with mild to moderate intellectual disability.</description>
        <dbReference type="MIM" id="617520"/>
    </disease>
    <text>The disease is caused by variants affecting the gene represented in this entry.</text>
</comment>
<comment type="sequence caution" evidence="15">
    <conflict type="miscellaneous discrepancy">
        <sequence resource="EMBL-CDS" id="AAH13377"/>
    </conflict>
</comment>
<comment type="sequence caution" evidence="15">
    <conflict type="miscellaneous discrepancy">
        <sequence resource="EMBL-CDS" id="BAB71020"/>
    </conflict>
    <text>Aberrant splicing.</text>
</comment>
<comment type="sequence caution" evidence="15">
    <conflict type="erroneous initiation">
        <sequence resource="EMBL-CDS" id="BAC04455"/>
    </conflict>
    <text>Truncated N-terminus.</text>
</comment>
<dbReference type="EMBL" id="AF538685">
    <property type="protein sequence ID" value="AAN15137.1"/>
    <property type="molecule type" value="mRNA"/>
</dbReference>
<dbReference type="EMBL" id="AC095046">
    <property type="protein sequence ID" value="AAY40903.1"/>
    <property type="molecule type" value="Genomic_DNA"/>
</dbReference>
<dbReference type="EMBL" id="AC104082">
    <property type="status" value="NOT_ANNOTATED_CDS"/>
    <property type="molecule type" value="Genomic_DNA"/>
</dbReference>
<dbReference type="EMBL" id="AB023210">
    <property type="protein sequence ID" value="BAA76837.2"/>
    <property type="molecule type" value="mRNA"/>
</dbReference>
<dbReference type="EMBL" id="AK055806">
    <property type="protein sequence ID" value="BAB71020.1"/>
    <property type="status" value="ALT_SEQ"/>
    <property type="molecule type" value="mRNA"/>
</dbReference>
<dbReference type="EMBL" id="AK094910">
    <property type="protein sequence ID" value="BAC04455.1"/>
    <property type="status" value="ALT_INIT"/>
    <property type="molecule type" value="mRNA"/>
</dbReference>
<dbReference type="EMBL" id="BC013377">
    <property type="protein sequence ID" value="AAH13377.1"/>
    <property type="status" value="ALT_SEQ"/>
    <property type="molecule type" value="mRNA"/>
</dbReference>
<dbReference type="EMBL" id="BC015214">
    <property type="protein sequence ID" value="AAH15214.2"/>
    <property type="molecule type" value="mRNA"/>
</dbReference>
<dbReference type="EMBL" id="BC065502">
    <property type="protein sequence ID" value="AAH65502.1"/>
    <property type="molecule type" value="mRNA"/>
</dbReference>
<dbReference type="EMBL" id="BC119633">
    <property type="protein sequence ID" value="AAI19634.1"/>
    <property type="molecule type" value="mRNA"/>
</dbReference>
<dbReference type="CCDS" id="CCDS3609.1">
    <molecule id="Q8IZQ1-1"/>
</dbReference>
<dbReference type="RefSeq" id="NP_055806.2">
    <molecule id="Q8IZQ1-1"/>
    <property type="nucleotide sequence ID" value="NM_014991.4"/>
</dbReference>
<dbReference type="RefSeq" id="XP_011530065.1">
    <molecule id="Q8IZQ1-1"/>
    <property type="nucleotide sequence ID" value="XM_011531763.4"/>
</dbReference>
<dbReference type="RefSeq" id="XP_011530067.1">
    <property type="nucleotide sequence ID" value="XM_011531765.2"/>
</dbReference>
<dbReference type="RefSeq" id="XP_047305807.1">
    <molecule id="Q8IZQ1-1"/>
    <property type="nucleotide sequence ID" value="XM_047449851.1"/>
</dbReference>
<dbReference type="RefSeq" id="XP_047305808.1">
    <molecule id="Q8IZQ1-1"/>
    <property type="nucleotide sequence ID" value="XM_047449852.1"/>
</dbReference>
<dbReference type="RefSeq" id="XP_047305810.1">
    <molecule id="Q8IZQ1-2"/>
    <property type="nucleotide sequence ID" value="XM_047449854.1"/>
</dbReference>
<dbReference type="RefSeq" id="XP_054205300.1">
    <molecule id="Q8IZQ1-1"/>
    <property type="nucleotide sequence ID" value="XM_054349325.1"/>
</dbReference>
<dbReference type="RefSeq" id="XP_054205301.1">
    <molecule id="Q8IZQ1-1"/>
    <property type="nucleotide sequence ID" value="XM_054349326.1"/>
</dbReference>
<dbReference type="RefSeq" id="XP_054205302.1">
    <molecule id="Q8IZQ1-1"/>
    <property type="nucleotide sequence ID" value="XM_054349327.1"/>
</dbReference>
<dbReference type="RefSeq" id="XP_054205305.1">
    <molecule id="Q8IZQ1-2"/>
    <property type="nucleotide sequence ID" value="XM_054349330.1"/>
</dbReference>
<dbReference type="PDB" id="3WIM">
    <property type="method" value="X-ray"/>
    <property type="resolution" value="2.60 A"/>
    <property type="chains" value="B=3341-3354"/>
</dbReference>
<dbReference type="PDB" id="6W9N">
    <property type="method" value="NMR"/>
    <property type="chains" value="A=3444-3518"/>
</dbReference>
<dbReference type="PDBsum" id="3WIM"/>
<dbReference type="PDBsum" id="6W9N"/>
<dbReference type="SMR" id="Q8IZQ1"/>
<dbReference type="BioGRID" id="116647">
    <property type="interactions" value="106"/>
</dbReference>
<dbReference type="FunCoup" id="Q8IZQ1">
    <property type="interactions" value="3060"/>
</dbReference>
<dbReference type="IntAct" id="Q8IZQ1">
    <property type="interactions" value="93"/>
</dbReference>
<dbReference type="MINT" id="Q8IZQ1"/>
<dbReference type="STRING" id="9606.ENSP00000295888"/>
<dbReference type="GlyCosmos" id="Q8IZQ1">
    <property type="glycosylation" value="2 sites, 1 glycan"/>
</dbReference>
<dbReference type="GlyGen" id="Q8IZQ1">
    <property type="glycosylation" value="6 sites, 1 N-linked glycan (1 site), 1 O-linked glycan (2 sites)"/>
</dbReference>
<dbReference type="iPTMnet" id="Q8IZQ1"/>
<dbReference type="PhosphoSitePlus" id="Q8IZQ1"/>
<dbReference type="SwissPalm" id="Q8IZQ1"/>
<dbReference type="BioMuta" id="WDFY3"/>
<dbReference type="DMDM" id="109896161"/>
<dbReference type="jPOST" id="Q8IZQ1"/>
<dbReference type="MassIVE" id="Q8IZQ1"/>
<dbReference type="PaxDb" id="9606-ENSP00000295888"/>
<dbReference type="PeptideAtlas" id="Q8IZQ1"/>
<dbReference type="ProteomicsDB" id="71404">
    <molecule id="Q8IZQ1-1"/>
</dbReference>
<dbReference type="ProteomicsDB" id="71405">
    <molecule id="Q8IZQ1-2"/>
</dbReference>
<dbReference type="Pumba" id="Q8IZQ1"/>
<dbReference type="Antibodypedia" id="25252">
    <property type="antibodies" value="255 antibodies from 26 providers"/>
</dbReference>
<dbReference type="DNASU" id="23001"/>
<dbReference type="Ensembl" id="ENST00000295888.9">
    <molecule id="Q8IZQ1-1"/>
    <property type="protein sequence ID" value="ENSP00000295888.4"/>
    <property type="gene ID" value="ENSG00000163625.17"/>
</dbReference>
<dbReference type="GeneID" id="23001"/>
<dbReference type="KEGG" id="hsa:23001"/>
<dbReference type="MANE-Select" id="ENST00000295888.9">
    <property type="protein sequence ID" value="ENSP00000295888.4"/>
    <property type="RefSeq nucleotide sequence ID" value="NM_014991.6"/>
    <property type="RefSeq protein sequence ID" value="NP_055806.2"/>
</dbReference>
<dbReference type="UCSC" id="uc003hpd.4">
    <molecule id="Q8IZQ1-1"/>
    <property type="organism name" value="human"/>
</dbReference>
<dbReference type="AGR" id="HGNC:20751"/>
<dbReference type="CTD" id="23001"/>
<dbReference type="DisGeNET" id="23001"/>
<dbReference type="GeneCards" id="WDFY3"/>
<dbReference type="HGNC" id="HGNC:20751">
    <property type="gene designation" value="WDFY3"/>
</dbReference>
<dbReference type="HPA" id="ENSG00000163625">
    <property type="expression patterns" value="Low tissue specificity"/>
</dbReference>
<dbReference type="MalaCards" id="WDFY3"/>
<dbReference type="MIM" id="617485">
    <property type="type" value="gene"/>
</dbReference>
<dbReference type="MIM" id="617520">
    <property type="type" value="phenotype"/>
</dbReference>
<dbReference type="neXtProt" id="NX_Q8IZQ1"/>
<dbReference type="OpenTargets" id="ENSG00000163625"/>
<dbReference type="Orphanet" id="528084">
    <property type="disease" value="Non-specific syndromic intellectual disability"/>
</dbReference>
<dbReference type="PharmGKB" id="PA134903706"/>
<dbReference type="VEuPathDB" id="HostDB:ENSG00000163625"/>
<dbReference type="eggNOG" id="KOG1786">
    <property type="taxonomic scope" value="Eukaryota"/>
</dbReference>
<dbReference type="eggNOG" id="KOG1788">
    <property type="taxonomic scope" value="Eukaryota"/>
</dbReference>
<dbReference type="GeneTree" id="ENSGT00940000155680"/>
<dbReference type="HOGENOM" id="CLU_000175_5_0_1"/>
<dbReference type="InParanoid" id="Q8IZQ1"/>
<dbReference type="OMA" id="GVCHLIE"/>
<dbReference type="OrthoDB" id="10018316at2759"/>
<dbReference type="PAN-GO" id="Q8IZQ1">
    <property type="GO annotations" value="2 GO annotations based on evolutionary models"/>
</dbReference>
<dbReference type="PhylomeDB" id="Q8IZQ1"/>
<dbReference type="TreeFam" id="TF313658"/>
<dbReference type="PathwayCommons" id="Q8IZQ1"/>
<dbReference type="SignaLink" id="Q8IZQ1"/>
<dbReference type="SIGNOR" id="Q8IZQ1"/>
<dbReference type="BioGRID-ORCS" id="23001">
    <property type="hits" value="9 hits in 1155 CRISPR screens"/>
</dbReference>
<dbReference type="ChiTaRS" id="WDFY3">
    <property type="organism name" value="human"/>
</dbReference>
<dbReference type="EvolutionaryTrace" id="Q8IZQ1"/>
<dbReference type="GeneWiki" id="WDFY3"/>
<dbReference type="GenomeRNAi" id="23001"/>
<dbReference type="Pharos" id="Q8IZQ1">
    <property type="development level" value="Tbio"/>
</dbReference>
<dbReference type="PRO" id="PR:Q8IZQ1"/>
<dbReference type="Proteomes" id="UP000005640">
    <property type="component" value="Chromosome 4"/>
</dbReference>
<dbReference type="RNAct" id="Q8IZQ1">
    <property type="molecule type" value="protein"/>
</dbReference>
<dbReference type="Bgee" id="ENSG00000163625">
    <property type="expression patterns" value="Expressed in sural nerve and 203 other cell types or tissues"/>
</dbReference>
<dbReference type="ExpressionAtlas" id="Q8IZQ1">
    <property type="expression patterns" value="baseline and differential"/>
</dbReference>
<dbReference type="GO" id="GO:0005776">
    <property type="term" value="C:autophagosome"/>
    <property type="evidence" value="ECO:0000315"/>
    <property type="project" value="UniProtKB"/>
</dbReference>
<dbReference type="GO" id="GO:0000421">
    <property type="term" value="C:autophagosome membrane"/>
    <property type="evidence" value="ECO:0000314"/>
    <property type="project" value="MGI"/>
</dbReference>
<dbReference type="GO" id="GO:0030424">
    <property type="term" value="C:axon"/>
    <property type="evidence" value="ECO:0007669"/>
    <property type="project" value="UniProtKB-SubCell"/>
</dbReference>
<dbReference type="GO" id="GO:0005737">
    <property type="term" value="C:cytoplasm"/>
    <property type="evidence" value="ECO:0000314"/>
    <property type="project" value="UniProtKB"/>
</dbReference>
<dbReference type="GO" id="GO:0005829">
    <property type="term" value="C:cytosol"/>
    <property type="evidence" value="ECO:0000314"/>
    <property type="project" value="HPA"/>
</dbReference>
<dbReference type="GO" id="GO:0016234">
    <property type="term" value="C:inclusion body"/>
    <property type="evidence" value="ECO:0000314"/>
    <property type="project" value="UniProtKB"/>
</dbReference>
<dbReference type="GO" id="GO:0016020">
    <property type="term" value="C:membrane"/>
    <property type="evidence" value="ECO:0000314"/>
    <property type="project" value="MGI"/>
</dbReference>
<dbReference type="GO" id="GO:0005635">
    <property type="term" value="C:nuclear envelope"/>
    <property type="evidence" value="ECO:0000314"/>
    <property type="project" value="UniProtKB"/>
</dbReference>
<dbReference type="GO" id="GO:0031965">
    <property type="term" value="C:nuclear membrane"/>
    <property type="evidence" value="ECO:0007669"/>
    <property type="project" value="UniProtKB-SubCell"/>
</dbReference>
<dbReference type="GO" id="GO:0005730">
    <property type="term" value="C:nucleolus"/>
    <property type="evidence" value="ECO:0000314"/>
    <property type="project" value="HPA"/>
</dbReference>
<dbReference type="GO" id="GO:0005654">
    <property type="term" value="C:nucleoplasm"/>
    <property type="evidence" value="ECO:0000314"/>
    <property type="project" value="HPA"/>
</dbReference>
<dbReference type="GO" id="GO:0043204">
    <property type="term" value="C:perikaryon"/>
    <property type="evidence" value="ECO:0007669"/>
    <property type="project" value="UniProtKB-SubCell"/>
</dbReference>
<dbReference type="GO" id="GO:0005886">
    <property type="term" value="C:plasma membrane"/>
    <property type="evidence" value="ECO:0000314"/>
    <property type="project" value="HPA"/>
</dbReference>
<dbReference type="GO" id="GO:0016605">
    <property type="term" value="C:PML body"/>
    <property type="evidence" value="ECO:0000314"/>
    <property type="project" value="UniProtKB"/>
</dbReference>
<dbReference type="GO" id="GO:0005545">
    <property type="term" value="F:1-phosphatidylinositol binding"/>
    <property type="evidence" value="ECO:0000314"/>
    <property type="project" value="MGI"/>
</dbReference>
<dbReference type="GO" id="GO:0008270">
    <property type="term" value="F:zinc ion binding"/>
    <property type="evidence" value="ECO:0007669"/>
    <property type="project" value="UniProtKB-KW"/>
</dbReference>
<dbReference type="GO" id="GO:0035973">
    <property type="term" value="P:aggrephagy"/>
    <property type="evidence" value="ECO:0000315"/>
    <property type="project" value="UniProtKB"/>
</dbReference>
<dbReference type="CDD" id="cd06071">
    <property type="entry name" value="Beach"/>
    <property type="match status" value="1"/>
</dbReference>
<dbReference type="CDD" id="cd15719">
    <property type="entry name" value="FYVE_WDFY3"/>
    <property type="match status" value="1"/>
</dbReference>
<dbReference type="CDD" id="cd01201">
    <property type="entry name" value="PH_BEACH"/>
    <property type="match status" value="1"/>
</dbReference>
<dbReference type="FunFam" id="3.30.40.10:FF:000028">
    <property type="entry name" value="Putative hepatocyte growth factor-regulated tyrosine kinase substrate"/>
    <property type="match status" value="1"/>
</dbReference>
<dbReference type="FunFam" id="1.10.1540.10:FF:000002">
    <property type="entry name" value="WD repeat and FYVE domain containing 3"/>
    <property type="match status" value="1"/>
</dbReference>
<dbReference type="FunFam" id="2.30.29.30:FF:000095">
    <property type="entry name" value="WD repeat and FYVE domain containing 3"/>
    <property type="match status" value="1"/>
</dbReference>
<dbReference type="FunFam" id="2.130.10.10:FF:000293">
    <property type="entry name" value="WD repeat and FYVE domain-containing protein 3"/>
    <property type="match status" value="1"/>
</dbReference>
<dbReference type="Gene3D" id="2.60.120.200">
    <property type="match status" value="1"/>
</dbReference>
<dbReference type="Gene3D" id="1.10.1540.10">
    <property type="entry name" value="BEACH domain"/>
    <property type="match status" value="1"/>
</dbReference>
<dbReference type="Gene3D" id="1.25.10.10">
    <property type="entry name" value="Leucine-rich Repeat Variant"/>
    <property type="match status" value="1"/>
</dbReference>
<dbReference type="Gene3D" id="2.30.29.30">
    <property type="entry name" value="Pleckstrin-homology domain (PH domain)/Phosphotyrosine-binding domain (PTB)"/>
    <property type="match status" value="1"/>
</dbReference>
<dbReference type="Gene3D" id="2.130.10.10">
    <property type="entry name" value="YVTN repeat-like/Quinoprotein amine dehydrogenase"/>
    <property type="match status" value="1"/>
</dbReference>
<dbReference type="Gene3D" id="3.30.40.10">
    <property type="entry name" value="Zinc/RING finger domain, C3HC4 (zinc finger)"/>
    <property type="match status" value="1"/>
</dbReference>
<dbReference type="InterPro" id="IPR056252">
    <property type="entry name" value="Alfy-like_Arm-like"/>
</dbReference>
<dbReference type="InterPro" id="IPR011989">
    <property type="entry name" value="ARM-like"/>
</dbReference>
<dbReference type="InterPro" id="IPR016024">
    <property type="entry name" value="ARM-type_fold"/>
</dbReference>
<dbReference type="InterPro" id="IPR000409">
    <property type="entry name" value="BEACH_dom"/>
</dbReference>
<dbReference type="InterPro" id="IPR036372">
    <property type="entry name" value="BEACH_dom_sf"/>
</dbReference>
<dbReference type="InterPro" id="IPR051944">
    <property type="entry name" value="BEACH_domain_protein"/>
</dbReference>
<dbReference type="InterPro" id="IPR013320">
    <property type="entry name" value="ConA-like_dom_sf"/>
</dbReference>
<dbReference type="InterPro" id="IPR023362">
    <property type="entry name" value="PH-BEACH_dom"/>
</dbReference>
<dbReference type="InterPro" id="IPR011993">
    <property type="entry name" value="PH-like_dom_sf"/>
</dbReference>
<dbReference type="InterPro" id="IPR015943">
    <property type="entry name" value="WD40/YVTN_repeat-like_dom_sf"/>
</dbReference>
<dbReference type="InterPro" id="IPR019775">
    <property type="entry name" value="WD40_repeat_CS"/>
</dbReference>
<dbReference type="InterPro" id="IPR036322">
    <property type="entry name" value="WD40_repeat_dom_sf"/>
</dbReference>
<dbReference type="InterPro" id="IPR001680">
    <property type="entry name" value="WD40_rpt"/>
</dbReference>
<dbReference type="InterPro" id="IPR000306">
    <property type="entry name" value="Znf_FYVE"/>
</dbReference>
<dbReference type="InterPro" id="IPR017455">
    <property type="entry name" value="Znf_FYVE-rel"/>
</dbReference>
<dbReference type="InterPro" id="IPR011011">
    <property type="entry name" value="Znf_FYVE_PHD"/>
</dbReference>
<dbReference type="InterPro" id="IPR013083">
    <property type="entry name" value="Znf_RING/FYVE/PHD"/>
</dbReference>
<dbReference type="PANTHER" id="PTHR46108">
    <property type="entry name" value="BLUE CHEESE"/>
    <property type="match status" value="1"/>
</dbReference>
<dbReference type="PANTHER" id="PTHR46108:SF1">
    <property type="entry name" value="WD REPEAT AND FYVE DOMAIN-CONTAINING PROTEIN 3"/>
    <property type="match status" value="1"/>
</dbReference>
<dbReference type="Pfam" id="PF23295">
    <property type="entry name" value="Arm_4"/>
    <property type="match status" value="1"/>
</dbReference>
<dbReference type="Pfam" id="PF02138">
    <property type="entry name" value="Beach"/>
    <property type="match status" value="1"/>
</dbReference>
<dbReference type="Pfam" id="PF01363">
    <property type="entry name" value="FYVE"/>
    <property type="match status" value="1"/>
</dbReference>
<dbReference type="Pfam" id="PF14844">
    <property type="entry name" value="PH_BEACH"/>
    <property type="match status" value="1"/>
</dbReference>
<dbReference type="Pfam" id="PF00400">
    <property type="entry name" value="WD40"/>
    <property type="match status" value="2"/>
</dbReference>
<dbReference type="SMART" id="SM01026">
    <property type="entry name" value="Beach"/>
    <property type="match status" value="1"/>
</dbReference>
<dbReference type="SMART" id="SM00064">
    <property type="entry name" value="FYVE"/>
    <property type="match status" value="1"/>
</dbReference>
<dbReference type="SMART" id="SM00320">
    <property type="entry name" value="WD40"/>
    <property type="match status" value="5"/>
</dbReference>
<dbReference type="SUPFAM" id="SSF48371">
    <property type="entry name" value="ARM repeat"/>
    <property type="match status" value="1"/>
</dbReference>
<dbReference type="SUPFAM" id="SSF81837">
    <property type="entry name" value="BEACH domain"/>
    <property type="match status" value="1"/>
</dbReference>
<dbReference type="SUPFAM" id="SSF49899">
    <property type="entry name" value="Concanavalin A-like lectins/glucanases"/>
    <property type="match status" value="1"/>
</dbReference>
<dbReference type="SUPFAM" id="SSF57903">
    <property type="entry name" value="FYVE/PHD zinc finger"/>
    <property type="match status" value="1"/>
</dbReference>
<dbReference type="SUPFAM" id="SSF50729">
    <property type="entry name" value="PH domain-like"/>
    <property type="match status" value="1"/>
</dbReference>
<dbReference type="SUPFAM" id="SSF50978">
    <property type="entry name" value="WD40 repeat-like"/>
    <property type="match status" value="1"/>
</dbReference>
<dbReference type="PROSITE" id="PS50197">
    <property type="entry name" value="BEACH"/>
    <property type="match status" value="1"/>
</dbReference>
<dbReference type="PROSITE" id="PS51783">
    <property type="entry name" value="PH_BEACH"/>
    <property type="match status" value="1"/>
</dbReference>
<dbReference type="PROSITE" id="PS00678">
    <property type="entry name" value="WD_REPEATS_1"/>
    <property type="match status" value="1"/>
</dbReference>
<dbReference type="PROSITE" id="PS50082">
    <property type="entry name" value="WD_REPEATS_2"/>
    <property type="match status" value="1"/>
</dbReference>
<dbReference type="PROSITE" id="PS50294">
    <property type="entry name" value="WD_REPEATS_REGION"/>
    <property type="match status" value="1"/>
</dbReference>
<dbReference type="PROSITE" id="PS50178">
    <property type="entry name" value="ZF_FYVE"/>
    <property type="match status" value="1"/>
</dbReference>
<sequence>MNMVKRIMGRPRQEECSPQDNALGLMHLRRLFTELCHPPRHMTQKEQEEKLYMMLPVFNRVFGNAPPNTMTEKFSDLLQFTTQVSRLMVTEIRRRASNKSTEAASRAIVQFLEINQSEEASRGWMLLTTINLLASSGQKTVDCMTTMSVPSTLVKCLYLFFDLPHVPEAVGGAQNELPLAERRGLLQKVFVQILVKLCSFVSPAEELAQKDDLQLLFSAITSWCPPYNLPWRKSAGEVLMTISRHGLSVNVVKYIHEKECLSTCVQNMQQSDDLSPLEIVEMFAGLSCFLKDSSDVSQTLLDDFRIWQGYNFLCDLLLRLEQAKEAESKDALKDLVNLITSLTTYGVSELKPAGITTGAPFLLPGFAVPQPAGKGHSVRNVQAFAVLQNAFLKAKTSFLAQIILDAITNIYMADNANYFILESQHTLSQFAEKISKLPEVQNKYFEMLEFVVFSLNYIPCKELISVSILLKSSSSYHCSIIAMKTLLKFTRHDYIFKDVFREVGLLEVMVNLLHKYAALLKDPTQALNEQGDSRNNSSVEDQKHLALLVMETLTVLLQGSNTNAGIFREFGGARCAHNIVKYPQCRQHALMTIQQLVLSPNGDDDMGTLLGLMHSAPPTELQLKTDILRALLSVLRESHRSRTVFRKVGGFVYITSLLVAMERSLSCPPKNGWEKVNQNQVFELLHTVFCTLTAAMRYEPANSHFFKTEIQYEKLADAVRFLGCFSDLRKISAMNVFPSNTQPFQRLLEEDVISIESVSPTLRHCSKLFIYLYKVATDSFDSRAEQIPPCLTSESSLPSPWGTPALSRKRHAYHSVSTPPVYPPKNVADLKLHVTTSSLQSSDAVIIHPGAMLAMLDLLASVGSVTQPEHALDLQLAVANILQSLVHTERNQQVMCEAGLHARLLQRCSAALADEDHSLHPPLQRMFERLASQALEPMVLREFLRLASPLNCGAWDKKLLKQYRVHKPSSLSYEPEMRSSMITSLEGLGTDNVFSLHEDNHYRISKSLVKSAEGSTVPLTRVKCLVSMTTPHDIRLHGSSVTPAFVEFDTSLEGFGCLFLPSLAPHNAPTNNTVTTGLIDGAVVSGIGSGERFFPPPSGLSYSSWFCIEHFSSPPNNHPVRLLTVVRRANSSEQHYVCLAIVLSAKDRSLIVSTKEELLQNYVDDFSEESSFYEILPCCARFRCGELIIEGQWHHLVLVMSKGMLKNSTAALYIDGQLVNTVKLHYVHSTPGGSGSANPPVVSTVYAYIGTPPAQRQIASLVWRLGPTHFLEEVLPSSNVTTIYELGPNYVGSFQAVCMPCKDAKSEGVVPSPVSLVPEEKVSFGLYALSVSSLTVARIRKVYNKLDSKAIAKQLGISSHENATPVKLIHNSAGHLNGSARTIGAALIGYLGVRTFVPKPVATTLQYVGGAAAILGLVAMASDVEGLYAAVKALVCVVKSNPLASKEMERIKGYQLLAMLLKKKRSLLNSHILHLTFSLVGTVDSGHETSIIPNSTAFQDLLCDFEVWLHAPYELHLSLFEHFIELLTESSEASKNAKLMREFQLIPKLLLTLRDMSLSQPTIAAISNVLSFLLQGFPSSNDLLRFGQFISSTLPTFAVCEKFVVMEINNEEKLDTGTEEEFGGLVSANLILLRNRLLDILLKLIYTSKEKTSINLQACEELVKTLGFDWIMMFMEEHLHSTTVTAAMRILVVLLSNQSILIKFKEGLSGGGWLEQTDSVLTNKIGTVLGFNVGRSAGGRSTVREINRDACHFPGFPVLQSFLPKHTNVPALYFLLMALFLQQPVSELPENLQVSVPVISCRSKQGCQFDLDSIWTFIFGVPASSGTVVSSIHNVCTEAVFLLLGMLRSMLTSPWQSEEEGSWLREYPVTLMQFFRYLYHNVPDLASMWMSPDFLCALAATVFPFNIRPYSEMVTDLDDEVGSPAEEFKAFAADTGMNRSQSEYCNVGTKTYLTNHPAKKFVFDFMRVLIIDNLCLTPASKQTPLIDLLLEASPERSTRTQQKEFQTYILDSVMDHLLAADVLLGEDASLPITSGGSYQVLVNNVFYFTQRVVDKLWQGMFNKESKLLIDFIIQLIAQSKRRSQGLSLDAVYHCLNRTILYQFSRAHKTVPQQVALLDSLRVLTVNRNLILGPGNHDQEFISCLAHCLINLHVGSNVDGFGLEAEARMTTWHIMIPSDIEPDGSYSQDISEGRQLLIKAVNRVWTELIHSKKQVLEELFKVTLPVNERGHVDIATARPLIEEAALKCWQNHLAHEKKCISRGEALAPTTQSKLSRVSSGFGLSKLTGSRRNRKESGLNKHSLSTQEISQWMFTHIAVVRDLVDTQYKEYQERQQNALKYVTEEWCQIECELLRERGLWGPPIGSHLDKWMLEMTEGPCRMRKKMVRNDMFYNHYPYVPETEQETNVASEIPSKQPETPDDIPQKKPARYRRAVSYDSKEYYMRLASGNPAIVQDAIVESSEGEAAQQEPEHGEDTIAKVKGLVKPPLKRSRSAPDGGDEENQEQLQDQIAEGSSIEEEEKTDNATLLRLLEEGEKIQHMYRCARVQGLDTSEGLLLFGKEHFYVIDGFTMTATREIRDIETLPPNMHEPIIPRGARQGPSQLKRTCSIFAYEDIKEVHKRRYLLQPIAVEVFSGDGRNYLLAFQKGIRNKVYQRFLAVVPSLTDSSESVSGQRPNTSVEQGSGLLSTLVGEKSVTQRWERGEISNFQYLMHLNTLAGRSYNDLMQYPVFPWILADYDSEEVDLTNPKTFRNLAKPMGAQTDERLAQYKKRYKDWEDPNGETPAYHYGTHYSSAMIVASYLVRMEPFTQIFLRLQGGHFDLADRMFHSVREAWYSASKHNMADVKELIPEFFYLPEFLFNSNNFDLGCKQNGTKLGDVILPPWAKGDPREFIRVHREALECDYVSAHLHEWIDLIFGYKQQGPAAVEAVNVFHHLFYEGQVDIYNINDPLKETATIGFINNFGQIPKQLFKKPHPPKRVRSRLNGDNAGISVLPGSTSDKIFFHHLDNLRPSLTPVKELKEPVGQIVCTDKGILAVEQNKVLIPPTWNKTFAWGYADLSCRLGTYESDKAMTVYECLSEWGQILCAICPNPKLVITGGTSTVVCVWEMGTSKEKAKTVTLKQALLGHTDTVTCATASLAYHIIVSGSRDRTCIIWDLNKLSFLTQLRGHRAPVSALCINELTGDIVSCAGTYIHVWSINGNPIVSVNTFTGRSQQIICCCMSEMNEWDTQNVIVTGHSDGVVRFWRMEFLQVPETPAPEPAEVLEMQEDCPEAQIGQEAQDEDSSDSEADEQSISQDPKDTPSQPSSTSHRPRAASCRATAAWCTDSGSDDSRRWSDQLSLDEKDGFIFVNYSEGQTRAHLQGPLSHPHPNPIEVRNYSRLKPGYRWERQLVFRSKLTMHTAFDRKDNAHPAEVTALGISKDHSRILVGDSRGRVFSWSVSDQPGRSAADHWVKDEGGDSCSGCSVRFSLTERRHHCRNCGQLFCQKCSRFQSEIKRLKISSPVRVCQNCYYNLQHERGSEDGPRNC</sequence>
<evidence type="ECO:0000250" key="1">
    <source>
        <dbReference type="UniProtKB" id="Q6VNB8"/>
    </source>
</evidence>
<evidence type="ECO:0000255" key="2">
    <source>
        <dbReference type="PROSITE-ProRule" id="PRU00026"/>
    </source>
</evidence>
<evidence type="ECO:0000255" key="3">
    <source>
        <dbReference type="PROSITE-ProRule" id="PRU00091"/>
    </source>
</evidence>
<evidence type="ECO:0000255" key="4">
    <source>
        <dbReference type="PROSITE-ProRule" id="PRU01119"/>
    </source>
</evidence>
<evidence type="ECO:0000256" key="5">
    <source>
        <dbReference type="SAM" id="MobiDB-lite"/>
    </source>
</evidence>
<evidence type="ECO:0000269" key="6">
    <source>
    </source>
</evidence>
<evidence type="ECO:0000269" key="7">
    <source>
    </source>
</evidence>
<evidence type="ECO:0000269" key="8">
    <source>
    </source>
</evidence>
<evidence type="ECO:0000269" key="9">
    <source>
    </source>
</evidence>
<evidence type="ECO:0000269" key="10">
    <source>
    </source>
</evidence>
<evidence type="ECO:0000269" key="11">
    <source>
    </source>
</evidence>
<evidence type="ECO:0000269" key="12">
    <source>
    </source>
</evidence>
<evidence type="ECO:0000303" key="13">
    <source>
    </source>
</evidence>
<evidence type="ECO:0000303" key="14">
    <source>
    </source>
</evidence>
<evidence type="ECO:0000305" key="15"/>
<evidence type="ECO:0007744" key="16">
    <source>
    </source>
</evidence>
<evidence type="ECO:0007829" key="17">
    <source>
        <dbReference type="PDB" id="3WIM"/>
    </source>
</evidence>
<evidence type="ECO:0007829" key="18">
    <source>
        <dbReference type="PDB" id="6W9N"/>
    </source>
</evidence>
<reference key="1">
    <citation type="journal article" date="2004" name="J. Cell Sci.">
        <title>Alfy, a novel FYVE-domain-containing protein associated with protein granules and autophagic membranes.</title>
        <authorList>
            <person name="Simonsen A."/>
            <person name="Birkeland H.C.G."/>
            <person name="Gillooly D.J."/>
            <person name="Mizushima N."/>
            <person name="Kuma A."/>
            <person name="Yoshimori T."/>
            <person name="Slagsvold T."/>
            <person name="Brech A."/>
            <person name="Stenmark H."/>
        </authorList>
    </citation>
    <scope>NUCLEOTIDE SEQUENCE [MRNA] (ISOFORM 1)</scope>
    <scope>SUBCELLULAR LOCATION</scope>
    <scope>BINDING TO PTDINS3P</scope>
    <source>
        <tissue>Brain</tissue>
    </source>
</reference>
<reference key="2">
    <citation type="journal article" date="2005" name="Nature">
        <title>Generation and annotation of the DNA sequences of human chromosomes 2 and 4.</title>
        <authorList>
            <person name="Hillier L.W."/>
            <person name="Graves T.A."/>
            <person name="Fulton R.S."/>
            <person name="Fulton L.A."/>
            <person name="Pepin K.H."/>
            <person name="Minx P."/>
            <person name="Wagner-McPherson C."/>
            <person name="Layman D."/>
            <person name="Wylie K."/>
            <person name="Sekhon M."/>
            <person name="Becker M.C."/>
            <person name="Fewell G.A."/>
            <person name="Delehaunty K.D."/>
            <person name="Miner T.L."/>
            <person name="Nash W.E."/>
            <person name="Kremitzki C."/>
            <person name="Oddy L."/>
            <person name="Du H."/>
            <person name="Sun H."/>
            <person name="Bradshaw-Cordum H."/>
            <person name="Ali J."/>
            <person name="Carter J."/>
            <person name="Cordes M."/>
            <person name="Harris A."/>
            <person name="Isak A."/>
            <person name="van Brunt A."/>
            <person name="Nguyen C."/>
            <person name="Du F."/>
            <person name="Courtney L."/>
            <person name="Kalicki J."/>
            <person name="Ozersky P."/>
            <person name="Abbott S."/>
            <person name="Armstrong J."/>
            <person name="Belter E.A."/>
            <person name="Caruso L."/>
            <person name="Cedroni M."/>
            <person name="Cotton M."/>
            <person name="Davidson T."/>
            <person name="Desai A."/>
            <person name="Elliott G."/>
            <person name="Erb T."/>
            <person name="Fronick C."/>
            <person name="Gaige T."/>
            <person name="Haakenson W."/>
            <person name="Haglund K."/>
            <person name="Holmes A."/>
            <person name="Harkins R."/>
            <person name="Kim K."/>
            <person name="Kruchowski S.S."/>
            <person name="Strong C.M."/>
            <person name="Grewal N."/>
            <person name="Goyea E."/>
            <person name="Hou S."/>
            <person name="Levy A."/>
            <person name="Martinka S."/>
            <person name="Mead K."/>
            <person name="McLellan M.D."/>
            <person name="Meyer R."/>
            <person name="Randall-Maher J."/>
            <person name="Tomlinson C."/>
            <person name="Dauphin-Kohlberg S."/>
            <person name="Kozlowicz-Reilly A."/>
            <person name="Shah N."/>
            <person name="Swearengen-Shahid S."/>
            <person name="Snider J."/>
            <person name="Strong J.T."/>
            <person name="Thompson J."/>
            <person name="Yoakum M."/>
            <person name="Leonard S."/>
            <person name="Pearman C."/>
            <person name="Trani L."/>
            <person name="Radionenko M."/>
            <person name="Waligorski J.E."/>
            <person name="Wang C."/>
            <person name="Rock S.M."/>
            <person name="Tin-Wollam A.-M."/>
            <person name="Maupin R."/>
            <person name="Latreille P."/>
            <person name="Wendl M.C."/>
            <person name="Yang S.-P."/>
            <person name="Pohl C."/>
            <person name="Wallis J.W."/>
            <person name="Spieth J."/>
            <person name="Bieri T.A."/>
            <person name="Berkowicz N."/>
            <person name="Nelson J.O."/>
            <person name="Osborne J."/>
            <person name="Ding L."/>
            <person name="Meyer R."/>
            <person name="Sabo A."/>
            <person name="Shotland Y."/>
            <person name="Sinha P."/>
            <person name="Wohldmann P.E."/>
            <person name="Cook L.L."/>
            <person name="Hickenbotham M.T."/>
            <person name="Eldred J."/>
            <person name="Williams D."/>
            <person name="Jones T.A."/>
            <person name="She X."/>
            <person name="Ciccarelli F.D."/>
            <person name="Izaurralde E."/>
            <person name="Taylor J."/>
            <person name="Schmutz J."/>
            <person name="Myers R.M."/>
            <person name="Cox D.R."/>
            <person name="Huang X."/>
            <person name="McPherson J.D."/>
            <person name="Mardis E.R."/>
            <person name="Clifton S.W."/>
            <person name="Warren W.C."/>
            <person name="Chinwalla A.T."/>
            <person name="Eddy S.R."/>
            <person name="Marra M.A."/>
            <person name="Ovcharenko I."/>
            <person name="Furey T.S."/>
            <person name="Miller W."/>
            <person name="Eichler E.E."/>
            <person name="Bork P."/>
            <person name="Suyama M."/>
            <person name="Torrents D."/>
            <person name="Waterston R.H."/>
            <person name="Wilson R.K."/>
        </authorList>
    </citation>
    <scope>NUCLEOTIDE SEQUENCE [LARGE SCALE GENOMIC DNA]</scope>
</reference>
<reference key="3">
    <citation type="journal article" date="1999" name="DNA Res.">
        <title>Prediction of the coding sequences of unidentified human genes. XIII. The complete sequences of 100 new cDNA clones from brain which code for large proteins in vitro.</title>
        <authorList>
            <person name="Nagase T."/>
            <person name="Ishikawa K."/>
            <person name="Suyama M."/>
            <person name="Kikuno R."/>
            <person name="Hirosawa M."/>
            <person name="Miyajima N."/>
            <person name="Tanaka A."/>
            <person name="Kotani H."/>
            <person name="Nomura N."/>
            <person name="Ohara O."/>
        </authorList>
    </citation>
    <scope>NUCLEOTIDE SEQUENCE [LARGE SCALE MRNA] OF 1971-3526 (ISOFORM 1)</scope>
    <source>
        <tissue>Brain</tissue>
    </source>
</reference>
<reference key="4">
    <citation type="journal article" date="2002" name="DNA Res.">
        <title>Construction of expression-ready cDNA clones for KIAA genes: manual curation of 330 KIAA cDNA clones.</title>
        <authorList>
            <person name="Nakajima D."/>
            <person name="Okazaki N."/>
            <person name="Yamakawa H."/>
            <person name="Kikuno R."/>
            <person name="Ohara O."/>
            <person name="Nagase T."/>
        </authorList>
    </citation>
    <scope>SEQUENCE REVISION</scope>
</reference>
<reference key="5">
    <citation type="journal article" date="2004" name="Nat. Genet.">
        <title>Complete sequencing and characterization of 21,243 full-length human cDNAs.</title>
        <authorList>
            <person name="Ota T."/>
            <person name="Suzuki Y."/>
            <person name="Nishikawa T."/>
            <person name="Otsuki T."/>
            <person name="Sugiyama T."/>
            <person name="Irie R."/>
            <person name="Wakamatsu A."/>
            <person name="Hayashi K."/>
            <person name="Sato H."/>
            <person name="Nagai K."/>
            <person name="Kimura K."/>
            <person name="Makita H."/>
            <person name="Sekine M."/>
            <person name="Obayashi M."/>
            <person name="Nishi T."/>
            <person name="Shibahara T."/>
            <person name="Tanaka T."/>
            <person name="Ishii S."/>
            <person name="Yamamoto J."/>
            <person name="Saito K."/>
            <person name="Kawai Y."/>
            <person name="Isono Y."/>
            <person name="Nakamura Y."/>
            <person name="Nagahari K."/>
            <person name="Murakami K."/>
            <person name="Yasuda T."/>
            <person name="Iwayanagi T."/>
            <person name="Wagatsuma M."/>
            <person name="Shiratori A."/>
            <person name="Sudo H."/>
            <person name="Hosoiri T."/>
            <person name="Kaku Y."/>
            <person name="Kodaira H."/>
            <person name="Kondo H."/>
            <person name="Sugawara M."/>
            <person name="Takahashi M."/>
            <person name="Kanda K."/>
            <person name="Yokoi T."/>
            <person name="Furuya T."/>
            <person name="Kikkawa E."/>
            <person name="Omura Y."/>
            <person name="Abe K."/>
            <person name="Kamihara K."/>
            <person name="Katsuta N."/>
            <person name="Sato K."/>
            <person name="Tanikawa M."/>
            <person name="Yamazaki M."/>
            <person name="Ninomiya K."/>
            <person name="Ishibashi T."/>
            <person name="Yamashita H."/>
            <person name="Murakawa K."/>
            <person name="Fujimori K."/>
            <person name="Tanai H."/>
            <person name="Kimata M."/>
            <person name="Watanabe M."/>
            <person name="Hiraoka S."/>
            <person name="Chiba Y."/>
            <person name="Ishida S."/>
            <person name="Ono Y."/>
            <person name="Takiguchi S."/>
            <person name="Watanabe S."/>
            <person name="Yosida M."/>
            <person name="Hotuta T."/>
            <person name="Kusano J."/>
            <person name="Kanehori K."/>
            <person name="Takahashi-Fujii A."/>
            <person name="Hara H."/>
            <person name="Tanase T.-O."/>
            <person name="Nomura Y."/>
            <person name="Togiya S."/>
            <person name="Komai F."/>
            <person name="Hara R."/>
            <person name="Takeuchi K."/>
            <person name="Arita M."/>
            <person name="Imose N."/>
            <person name="Musashino K."/>
            <person name="Yuuki H."/>
            <person name="Oshima A."/>
            <person name="Sasaki N."/>
            <person name="Aotsuka S."/>
            <person name="Yoshikawa Y."/>
            <person name="Matsunawa H."/>
            <person name="Ichihara T."/>
            <person name="Shiohata N."/>
            <person name="Sano S."/>
            <person name="Moriya S."/>
            <person name="Momiyama H."/>
            <person name="Satoh N."/>
            <person name="Takami S."/>
            <person name="Terashima Y."/>
            <person name="Suzuki O."/>
            <person name="Nakagawa S."/>
            <person name="Senoh A."/>
            <person name="Mizoguchi H."/>
            <person name="Goto Y."/>
            <person name="Shimizu F."/>
            <person name="Wakebe H."/>
            <person name="Hishigaki H."/>
            <person name="Watanabe T."/>
            <person name="Sugiyama A."/>
            <person name="Takemoto M."/>
            <person name="Kawakami B."/>
            <person name="Yamazaki M."/>
            <person name="Watanabe K."/>
            <person name="Kumagai A."/>
            <person name="Itakura S."/>
            <person name="Fukuzumi Y."/>
            <person name="Fujimori Y."/>
            <person name="Komiyama M."/>
            <person name="Tashiro H."/>
            <person name="Tanigami A."/>
            <person name="Fujiwara T."/>
            <person name="Ono T."/>
            <person name="Yamada K."/>
            <person name="Fujii Y."/>
            <person name="Ozaki K."/>
            <person name="Hirao M."/>
            <person name="Ohmori Y."/>
            <person name="Kawabata A."/>
            <person name="Hikiji T."/>
            <person name="Kobatake N."/>
            <person name="Inagaki H."/>
            <person name="Ikema Y."/>
            <person name="Okamoto S."/>
            <person name="Okitani R."/>
            <person name="Kawakami T."/>
            <person name="Noguchi S."/>
            <person name="Itoh T."/>
            <person name="Shigeta K."/>
            <person name="Senba T."/>
            <person name="Matsumura K."/>
            <person name="Nakajima Y."/>
            <person name="Mizuno T."/>
            <person name="Morinaga M."/>
            <person name="Sasaki M."/>
            <person name="Togashi T."/>
            <person name="Oyama M."/>
            <person name="Hata H."/>
            <person name="Watanabe M."/>
            <person name="Komatsu T."/>
            <person name="Mizushima-Sugano J."/>
            <person name="Satoh T."/>
            <person name="Shirai Y."/>
            <person name="Takahashi Y."/>
            <person name="Nakagawa K."/>
            <person name="Okumura K."/>
            <person name="Nagase T."/>
            <person name="Nomura N."/>
            <person name="Kikuchi H."/>
            <person name="Masuho Y."/>
            <person name="Yamashita R."/>
            <person name="Nakai K."/>
            <person name="Yada T."/>
            <person name="Nakamura Y."/>
            <person name="Ohara O."/>
            <person name="Isogai T."/>
            <person name="Sugano S."/>
        </authorList>
    </citation>
    <scope>NUCLEOTIDE SEQUENCE [LARGE SCALE MRNA] OF 2381-3036 (ISOFORM 2)</scope>
    <scope>NUCLEOTIDE SEQUENCE [LARGE SCALE MRNA] OF 2650-3526 (ISOFORM 1)</scope>
    <source>
        <tissue>Corpus callosum</tissue>
        <tissue>Kidney</tissue>
    </source>
</reference>
<reference key="6">
    <citation type="journal article" date="2004" name="Genome Res.">
        <title>The status, quality, and expansion of the NIH full-length cDNA project: the Mammalian Gene Collection (MGC).</title>
        <authorList>
            <consortium name="The MGC Project Team"/>
        </authorList>
    </citation>
    <scope>NUCLEOTIDE SEQUENCE [LARGE SCALE MRNA] OF 2749-3526 (ISOFORM 1)</scope>
    <source>
        <tissue>Colon</tissue>
        <tissue>Duodenum</tissue>
        <tissue>Ovary</tissue>
    </source>
</reference>
<reference key="7">
    <citation type="journal article" date="2008" name="Proc. Natl. Acad. Sci. U.S.A.">
        <title>A quantitative atlas of mitotic phosphorylation.</title>
        <authorList>
            <person name="Dephoure N."/>
            <person name="Zhou C."/>
            <person name="Villen J."/>
            <person name="Beausoleil S.A."/>
            <person name="Bakalarski C.E."/>
            <person name="Elledge S.J."/>
            <person name="Gygi S.P."/>
        </authorList>
    </citation>
    <scope>IDENTIFICATION BY MASS SPECTROMETRY [LARGE SCALE ANALYSIS]</scope>
    <source>
        <tissue>Cervix carcinoma</tissue>
    </source>
</reference>
<reference key="8">
    <citation type="journal article" date="2010" name="Autophagy">
        <title>p62/SQSTM1 and ALFY interact to facilitate the formation of p62 bodies/ALIS and their degradation by autophagy.</title>
        <authorList>
            <person name="Clausen T.H."/>
            <person name="Lamark T."/>
            <person name="Isakson P."/>
            <person name="Finley K."/>
            <person name="Larsen K.B."/>
            <person name="Brech A."/>
            <person name="Overvatn A."/>
            <person name="Stenmark H."/>
            <person name="Bjorkoy G."/>
            <person name="Simonsen A."/>
            <person name="Johansen T."/>
        </authorList>
    </citation>
    <scope>FUNCTION</scope>
    <scope>INTERACTION WITH SQSTM1</scope>
    <scope>SUBCELLULAR LOCATION</scope>
</reference>
<reference key="9">
    <citation type="journal article" date="2010" name="Biochem. Biophys. Res. Commun.">
        <title>Functional interaction between sequestosome-1/p62 and autophagy-linked FYVE-containing protein WDFY3 in human osteoclasts.</title>
        <authorList>
            <person name="Hocking L.J."/>
            <person name="Mellis D.J."/>
            <person name="McCabe P.S."/>
            <person name="Helfrich M.H."/>
            <person name="Rogers M.J."/>
        </authorList>
    </citation>
    <scope>SUBCELLULAR LOCATION</scope>
    <scope>INTERACTION WITH SQSTM1</scope>
    <scope>TISSUE SPECIFICITY</scope>
</reference>
<reference key="10">
    <citation type="journal article" date="2010" name="Mol. Cell">
        <title>The selective macroautophagic degradation of aggregated proteins requires the PI3P-binding protein Alfy.</title>
        <authorList>
            <person name="Filimonenko M."/>
            <person name="Isakson P."/>
            <person name="Finley K.D."/>
            <person name="Anderson M."/>
            <person name="Jeong H."/>
            <person name="Melia T.J."/>
            <person name="Bartlett B.J."/>
            <person name="Myers K.M."/>
            <person name="Birkeland H.C."/>
            <person name="Lamark T."/>
            <person name="Krainc D."/>
            <person name="Brech A."/>
            <person name="Stenmark H."/>
            <person name="Simonsen A."/>
            <person name="Yamamoto A."/>
        </authorList>
    </citation>
    <scope>FUNCTION</scope>
    <scope>INTERACTION WITH ATG5</scope>
    <scope>ASSOCIATION WITH THE ATG12-ATG5-ATG16L COMPLEX</scope>
    <scope>SUBCELLULAR LOCATION</scope>
</reference>
<reference key="11">
    <citation type="journal article" date="2013" name="Autophagy">
        <title>TRAF6 mediates ubiquitination of KIF23/MKLP1 and is required for midbody ring degradation by selective autophagy.</title>
        <authorList>
            <person name="Isakson P."/>
            <person name="Lystad A.H."/>
            <person name="Breen K."/>
            <person name="Koster G."/>
            <person name="Stenmark H."/>
            <person name="Simonsen A."/>
        </authorList>
    </citation>
    <scope>FUNCTION</scope>
</reference>
<reference key="12">
    <citation type="journal article" date="2013" name="J. Proteome Res.">
        <title>Toward a comprehensive characterization of a human cancer cell phosphoproteome.</title>
        <authorList>
            <person name="Zhou H."/>
            <person name="Di Palma S."/>
            <person name="Preisinger C."/>
            <person name="Peng M."/>
            <person name="Polat A.N."/>
            <person name="Heck A.J."/>
            <person name="Mohammed S."/>
        </authorList>
    </citation>
    <scope>PHOSPHORYLATION [LARGE SCALE ANALYSIS] AT SER-2278 AND SER-3339</scope>
    <scope>IDENTIFICATION BY MASS SPECTROMETRY [LARGE SCALE ANALYSIS]</scope>
    <source>
        <tissue>Cervix carcinoma</tissue>
        <tissue>Erythroleukemia</tissue>
    </source>
</reference>
<reference key="13">
    <citation type="journal article" date="2014" name="J. Proteomics">
        <title>An enzyme assisted RP-RPLC approach for in-depth analysis of human liver phosphoproteome.</title>
        <authorList>
            <person name="Bian Y."/>
            <person name="Song C."/>
            <person name="Cheng K."/>
            <person name="Dong M."/>
            <person name="Wang F."/>
            <person name="Huang J."/>
            <person name="Sun D."/>
            <person name="Wang L."/>
            <person name="Ye M."/>
            <person name="Zou H."/>
        </authorList>
    </citation>
    <scope>IDENTIFICATION BY MASS SPECTROMETRY [LARGE SCALE ANALYSIS]</scope>
    <source>
        <tissue>Liver</tissue>
    </source>
</reference>
<reference key="14">
    <citation type="journal article" date="2014" name="EMBO Rep.">
        <title>Structural determinants in GABARAP required for the selective binding and recruitment of ALFY to LC3B-positive structures.</title>
        <authorList>
            <person name="Lystad A.H."/>
            <person name="Ichimura Y."/>
            <person name="Takagi K."/>
            <person name="Yang Y."/>
            <person name="Pankiv S."/>
            <person name="Kanegae Y."/>
            <person name="Kageyama S."/>
            <person name="Suzuki M."/>
            <person name="Saito I."/>
            <person name="Mizushima T."/>
            <person name="Komatsu M."/>
            <person name="Simonsen A."/>
        </authorList>
    </citation>
    <scope>X-RAY CRYSTALLOGRAPHY (2.60 ANGSTROMS) OF 3341-3354 IN COMPLEX WITH GABARAP</scope>
    <scope>INTERACTION WITH MAP1LC3C; GABARAPL1 AND GABARAPL2</scope>
    <scope>LIR MOTIF</scope>
    <scope>MUTAGENESIS OF LYS-3343; ASP-3344; PHE-3346; ILE-3347; PHE-3348; VAL-3349 AND TYR-3351</scope>
</reference>
<reference key="15">
    <citation type="journal article" date="2016" name="PLoS Genet.">
        <title>ALFY-controlled DVL3 autophagy regulates Wnt signaling, determining human brain size.</title>
        <authorList>
            <person name="Kadir R."/>
            <person name="Harel T."/>
            <person name="Markus B."/>
            <person name="Perez Y."/>
            <person name="Bakhrat A."/>
            <person name="Cohen I."/>
            <person name="Volodarsky M."/>
            <person name="Feintsein-Linial M."/>
            <person name="Chervinski E."/>
            <person name="Zlotogora J."/>
            <person name="Sivan S."/>
            <person name="Birnbaum R.Y."/>
            <person name="Abdu U."/>
            <person name="Shalev S."/>
            <person name="Birk O.S."/>
        </authorList>
    </citation>
    <scope>VARIANT MCPH18 TRP-2637</scope>
    <scope>CHARACTERIZATION OF VARIANT MCPH18 TRP-2637</scope>
    <scope>FUNCTION</scope>
</reference>
<name>WDFY3_HUMAN</name>
<protein>
    <recommendedName>
        <fullName>WD repeat and FYVE domain-containing protein 3</fullName>
    </recommendedName>
    <alternativeName>
        <fullName>Autophagy-linked FYVE protein</fullName>
        <shortName>Alfy</shortName>
    </alternativeName>
</protein>
<organism>
    <name type="scientific">Homo sapiens</name>
    <name type="common">Human</name>
    <dbReference type="NCBI Taxonomy" id="9606"/>
    <lineage>
        <taxon>Eukaryota</taxon>
        <taxon>Metazoa</taxon>
        <taxon>Chordata</taxon>
        <taxon>Craniata</taxon>
        <taxon>Vertebrata</taxon>
        <taxon>Euteleostomi</taxon>
        <taxon>Mammalia</taxon>
        <taxon>Eutheria</taxon>
        <taxon>Euarchontoglires</taxon>
        <taxon>Primates</taxon>
        <taxon>Haplorrhini</taxon>
        <taxon>Catarrhini</taxon>
        <taxon>Hominidae</taxon>
        <taxon>Homo</taxon>
    </lineage>
</organism>
<accession>Q8IZQ1</accession>
<accession>Q4W5K5</accession>
<accession>Q6P0Q5</accession>
<accession>Q8N1T2</accession>
<accession>Q8NAV6</accession>
<accession>Q96BS7</accession>
<accession>Q96D33</accession>
<accession>Q96N85</accession>
<accession>Q9Y2J7</accession>
<keyword id="KW-0002">3D-structure</keyword>
<keyword id="KW-0025">Alternative splicing</keyword>
<keyword id="KW-0072">Autophagy</keyword>
<keyword id="KW-0966">Cell projection</keyword>
<keyword id="KW-0963">Cytoplasm</keyword>
<keyword id="KW-0217">Developmental protein</keyword>
<keyword id="KW-0225">Disease variant</keyword>
<keyword id="KW-0446">Lipid-binding</keyword>
<keyword id="KW-0472">Membrane</keyword>
<keyword id="KW-0479">Metal-binding</keyword>
<keyword id="KW-0539">Nucleus</keyword>
<keyword id="KW-0597">Phosphoprotein</keyword>
<keyword id="KW-0905">Primary microcephaly</keyword>
<keyword id="KW-1267">Proteomics identification</keyword>
<keyword id="KW-1185">Reference proteome</keyword>
<keyword id="KW-0677">Repeat</keyword>
<keyword id="KW-0853">WD repeat</keyword>
<keyword id="KW-0862">Zinc</keyword>
<keyword id="KW-0863">Zinc-finger</keyword>
<proteinExistence type="evidence at protein level"/>
<gene>
    <name type="primary">WDFY3</name>
    <name type="synonym">KIAA0993</name>
</gene>